<gene>
    <name evidence="1" type="primary">lspA</name>
    <name type="ordered locus">KPN78578_00210</name>
    <name type="ORF">KPN_00022</name>
</gene>
<sequence length="166" mass="18326">MSKSICSTGLRWLWVVVAVLIIDLGSKFLILQNFALGETVPLFPSLNLHYARNYGAAFSFLADSGGWQRWFFSGIAIGICVVLTVLMYRSKATQKLNNIAYALIIGGALGNLFDRLWHGFVVDMIDFYVGDWHFATFNLADSAICIGAALIVLEGFLPKPTVKEQA</sequence>
<proteinExistence type="inferred from homology"/>
<reference key="1">
    <citation type="submission" date="2006-09" db="EMBL/GenBank/DDBJ databases">
        <authorList>
            <consortium name="The Klebsiella pneumonia Genome Sequencing Project"/>
            <person name="McClelland M."/>
            <person name="Sanderson E.K."/>
            <person name="Spieth J."/>
            <person name="Clifton W.S."/>
            <person name="Latreille P."/>
            <person name="Sabo A."/>
            <person name="Pepin K."/>
            <person name="Bhonagiri V."/>
            <person name="Porwollik S."/>
            <person name="Ali J."/>
            <person name="Wilson R.K."/>
        </authorList>
    </citation>
    <scope>NUCLEOTIDE SEQUENCE [LARGE SCALE GENOMIC DNA]</scope>
    <source>
        <strain>ATCC 700721 / MGH 78578</strain>
    </source>
</reference>
<feature type="chain" id="PRO_1000038807" description="Lipoprotein signal peptidase">
    <location>
        <begin position="1"/>
        <end position="166"/>
    </location>
</feature>
<feature type="transmembrane region" description="Helical" evidence="1">
    <location>
        <begin position="12"/>
        <end position="32"/>
    </location>
</feature>
<feature type="transmembrane region" description="Helical" evidence="1">
    <location>
        <begin position="70"/>
        <end position="90"/>
    </location>
</feature>
<feature type="transmembrane region" description="Helical" evidence="1">
    <location>
        <begin position="102"/>
        <end position="122"/>
    </location>
</feature>
<feature type="transmembrane region" description="Helical" evidence="1">
    <location>
        <begin position="137"/>
        <end position="157"/>
    </location>
</feature>
<feature type="active site" evidence="1">
    <location>
        <position position="123"/>
    </location>
</feature>
<feature type="active site" evidence="1">
    <location>
        <position position="141"/>
    </location>
</feature>
<accession>A6T4G1</accession>
<keyword id="KW-0064">Aspartyl protease</keyword>
<keyword id="KW-0997">Cell inner membrane</keyword>
<keyword id="KW-1003">Cell membrane</keyword>
<keyword id="KW-0378">Hydrolase</keyword>
<keyword id="KW-0472">Membrane</keyword>
<keyword id="KW-0645">Protease</keyword>
<keyword id="KW-0812">Transmembrane</keyword>
<keyword id="KW-1133">Transmembrane helix</keyword>
<organism>
    <name type="scientific">Klebsiella pneumoniae subsp. pneumoniae (strain ATCC 700721 / MGH 78578)</name>
    <dbReference type="NCBI Taxonomy" id="272620"/>
    <lineage>
        <taxon>Bacteria</taxon>
        <taxon>Pseudomonadati</taxon>
        <taxon>Pseudomonadota</taxon>
        <taxon>Gammaproteobacteria</taxon>
        <taxon>Enterobacterales</taxon>
        <taxon>Enterobacteriaceae</taxon>
        <taxon>Klebsiella/Raoultella group</taxon>
        <taxon>Klebsiella</taxon>
        <taxon>Klebsiella pneumoniae complex</taxon>
    </lineage>
</organism>
<evidence type="ECO:0000255" key="1">
    <source>
        <dbReference type="HAMAP-Rule" id="MF_00161"/>
    </source>
</evidence>
<comment type="function">
    <text evidence="1">This protein specifically catalyzes the removal of signal peptides from prolipoproteins.</text>
</comment>
<comment type="catalytic activity">
    <reaction evidence="1">
        <text>Release of signal peptides from bacterial membrane prolipoproteins. Hydrolyzes -Xaa-Yaa-Zaa-|-(S,diacylglyceryl)Cys-, in which Xaa is hydrophobic (preferably Leu), and Yaa (Ala or Ser) and Zaa (Gly or Ala) have small, neutral side chains.</text>
        <dbReference type="EC" id="3.4.23.36"/>
    </reaction>
</comment>
<comment type="pathway">
    <text evidence="1">Protein modification; lipoprotein biosynthesis (signal peptide cleavage).</text>
</comment>
<comment type="subcellular location">
    <subcellularLocation>
        <location evidence="1">Cell inner membrane</location>
        <topology evidence="1">Multi-pass membrane protein</topology>
    </subcellularLocation>
</comment>
<comment type="similarity">
    <text evidence="1">Belongs to the peptidase A8 family.</text>
</comment>
<protein>
    <recommendedName>
        <fullName evidence="1">Lipoprotein signal peptidase</fullName>
        <ecNumber evidence="1">3.4.23.36</ecNumber>
    </recommendedName>
    <alternativeName>
        <fullName evidence="1">Prolipoprotein signal peptidase</fullName>
    </alternativeName>
    <alternativeName>
        <fullName evidence="1">Signal peptidase II</fullName>
        <shortName evidence="1">SPase II</shortName>
    </alternativeName>
</protein>
<name>LSPA_KLEP7</name>
<dbReference type="EC" id="3.4.23.36" evidence="1"/>
<dbReference type="EMBL" id="CP000647">
    <property type="protein sequence ID" value="ABR75482.1"/>
    <property type="molecule type" value="Genomic_DNA"/>
</dbReference>
<dbReference type="RefSeq" id="WP_002887973.1">
    <property type="nucleotide sequence ID" value="NC_009648.1"/>
</dbReference>
<dbReference type="SMR" id="A6T4G1"/>
<dbReference type="STRING" id="272620.KPN_00022"/>
<dbReference type="MEROPS" id="A08.001"/>
<dbReference type="PaxDb" id="272620-KPN_00022"/>
<dbReference type="EnsemblBacteria" id="ABR75482">
    <property type="protein sequence ID" value="ABR75482"/>
    <property type="gene ID" value="KPN_00022"/>
</dbReference>
<dbReference type="KEGG" id="kpn:KPN_00022"/>
<dbReference type="HOGENOM" id="CLU_083252_4_0_6"/>
<dbReference type="UniPathway" id="UPA00665"/>
<dbReference type="Proteomes" id="UP000000265">
    <property type="component" value="Chromosome"/>
</dbReference>
<dbReference type="GO" id="GO:0005886">
    <property type="term" value="C:plasma membrane"/>
    <property type="evidence" value="ECO:0007669"/>
    <property type="project" value="UniProtKB-SubCell"/>
</dbReference>
<dbReference type="GO" id="GO:0004190">
    <property type="term" value="F:aspartic-type endopeptidase activity"/>
    <property type="evidence" value="ECO:0007669"/>
    <property type="project" value="UniProtKB-UniRule"/>
</dbReference>
<dbReference type="GO" id="GO:0006508">
    <property type="term" value="P:proteolysis"/>
    <property type="evidence" value="ECO:0007669"/>
    <property type="project" value="UniProtKB-KW"/>
</dbReference>
<dbReference type="HAMAP" id="MF_00161">
    <property type="entry name" value="LspA"/>
    <property type="match status" value="1"/>
</dbReference>
<dbReference type="InterPro" id="IPR001872">
    <property type="entry name" value="Peptidase_A8"/>
</dbReference>
<dbReference type="NCBIfam" id="TIGR00077">
    <property type="entry name" value="lspA"/>
    <property type="match status" value="1"/>
</dbReference>
<dbReference type="PANTHER" id="PTHR33695">
    <property type="entry name" value="LIPOPROTEIN SIGNAL PEPTIDASE"/>
    <property type="match status" value="1"/>
</dbReference>
<dbReference type="PANTHER" id="PTHR33695:SF1">
    <property type="entry name" value="LIPOPROTEIN SIGNAL PEPTIDASE"/>
    <property type="match status" value="1"/>
</dbReference>
<dbReference type="Pfam" id="PF01252">
    <property type="entry name" value="Peptidase_A8"/>
    <property type="match status" value="1"/>
</dbReference>
<dbReference type="PRINTS" id="PR00781">
    <property type="entry name" value="LIPOSIGPTASE"/>
</dbReference>
<dbReference type="PROSITE" id="PS00855">
    <property type="entry name" value="SPASE_II"/>
    <property type="match status" value="1"/>
</dbReference>